<accession>B7N8H0</accession>
<comment type="function">
    <text evidence="1">Catalyzes the hydrolysis of esters.</text>
</comment>
<comment type="catalytic activity">
    <reaction evidence="1">
        <text>a carboxylic ester + H2O = an alcohol + a carboxylate + H(+)</text>
        <dbReference type="Rhea" id="RHEA:21164"/>
        <dbReference type="ChEBI" id="CHEBI:15377"/>
        <dbReference type="ChEBI" id="CHEBI:15378"/>
        <dbReference type="ChEBI" id="CHEBI:29067"/>
        <dbReference type="ChEBI" id="CHEBI:30879"/>
        <dbReference type="ChEBI" id="CHEBI:33308"/>
        <dbReference type="EC" id="3.1.1.1"/>
    </reaction>
</comment>
<comment type="similarity">
    <text evidence="1">Belongs to the FrsA family.</text>
</comment>
<dbReference type="EC" id="3.1.1.1" evidence="1"/>
<dbReference type="EMBL" id="CU928163">
    <property type="protein sequence ID" value="CAR11520.1"/>
    <property type="molecule type" value="Genomic_DNA"/>
</dbReference>
<dbReference type="RefSeq" id="WP_000189546.1">
    <property type="nucleotide sequence ID" value="NC_011751.1"/>
</dbReference>
<dbReference type="RefSeq" id="YP_002411074.1">
    <property type="nucleotide sequence ID" value="NC_011751.1"/>
</dbReference>
<dbReference type="SMR" id="B7N8H0"/>
<dbReference type="STRING" id="585056.ECUMN_0305"/>
<dbReference type="ESTHER" id="ecoli-yafa">
    <property type="family name" value="Duf_1100-R"/>
</dbReference>
<dbReference type="KEGG" id="eum:ECUMN_0305"/>
<dbReference type="PATRIC" id="fig|585056.7.peg.500"/>
<dbReference type="HOGENOM" id="CLU_036819_0_0_6"/>
<dbReference type="Proteomes" id="UP000007097">
    <property type="component" value="Chromosome"/>
</dbReference>
<dbReference type="GO" id="GO:0106435">
    <property type="term" value="F:carboxylesterase activity"/>
    <property type="evidence" value="ECO:0007669"/>
    <property type="project" value="UniProtKB-EC"/>
</dbReference>
<dbReference type="FunFam" id="3.40.50.1820:FF:000022">
    <property type="entry name" value="Esterase FrsA"/>
    <property type="match status" value="1"/>
</dbReference>
<dbReference type="Gene3D" id="3.40.50.1820">
    <property type="entry name" value="alpha/beta hydrolase"/>
    <property type="match status" value="1"/>
</dbReference>
<dbReference type="HAMAP" id="MF_01063">
    <property type="entry name" value="FrsA"/>
    <property type="match status" value="1"/>
</dbReference>
<dbReference type="InterPro" id="IPR029058">
    <property type="entry name" value="AB_hydrolase_fold"/>
</dbReference>
<dbReference type="InterPro" id="IPR043423">
    <property type="entry name" value="FrsA"/>
</dbReference>
<dbReference type="InterPro" id="IPR010520">
    <property type="entry name" value="FrsA-like"/>
</dbReference>
<dbReference type="InterPro" id="IPR050261">
    <property type="entry name" value="FrsA_esterase"/>
</dbReference>
<dbReference type="NCBIfam" id="NF003460">
    <property type="entry name" value="PRK05077.1"/>
    <property type="match status" value="1"/>
</dbReference>
<dbReference type="PANTHER" id="PTHR22946">
    <property type="entry name" value="DIENELACTONE HYDROLASE DOMAIN-CONTAINING PROTEIN-RELATED"/>
    <property type="match status" value="1"/>
</dbReference>
<dbReference type="PANTHER" id="PTHR22946:SF4">
    <property type="entry name" value="ESTERASE FRSA"/>
    <property type="match status" value="1"/>
</dbReference>
<dbReference type="Pfam" id="PF06500">
    <property type="entry name" value="FrsA-like"/>
    <property type="match status" value="1"/>
</dbReference>
<dbReference type="SUPFAM" id="SSF53474">
    <property type="entry name" value="alpha/beta-Hydrolases"/>
    <property type="match status" value="1"/>
</dbReference>
<protein>
    <recommendedName>
        <fullName evidence="1">Esterase FrsA</fullName>
        <ecNumber evidence="1">3.1.1.1</ecNumber>
    </recommendedName>
</protein>
<gene>
    <name evidence="1" type="primary">frsA</name>
    <name type="ordered locus">ECUMN_0305</name>
</gene>
<name>FRSA_ECOLU</name>
<proteinExistence type="inferred from homology"/>
<evidence type="ECO:0000255" key="1">
    <source>
        <dbReference type="HAMAP-Rule" id="MF_01063"/>
    </source>
</evidence>
<reference key="1">
    <citation type="journal article" date="2009" name="PLoS Genet.">
        <title>Organised genome dynamics in the Escherichia coli species results in highly diverse adaptive paths.</title>
        <authorList>
            <person name="Touchon M."/>
            <person name="Hoede C."/>
            <person name="Tenaillon O."/>
            <person name="Barbe V."/>
            <person name="Baeriswyl S."/>
            <person name="Bidet P."/>
            <person name="Bingen E."/>
            <person name="Bonacorsi S."/>
            <person name="Bouchier C."/>
            <person name="Bouvet O."/>
            <person name="Calteau A."/>
            <person name="Chiapello H."/>
            <person name="Clermont O."/>
            <person name="Cruveiller S."/>
            <person name="Danchin A."/>
            <person name="Diard M."/>
            <person name="Dossat C."/>
            <person name="Karoui M.E."/>
            <person name="Frapy E."/>
            <person name="Garry L."/>
            <person name="Ghigo J.M."/>
            <person name="Gilles A.M."/>
            <person name="Johnson J."/>
            <person name="Le Bouguenec C."/>
            <person name="Lescat M."/>
            <person name="Mangenot S."/>
            <person name="Martinez-Jehanne V."/>
            <person name="Matic I."/>
            <person name="Nassif X."/>
            <person name="Oztas S."/>
            <person name="Petit M.A."/>
            <person name="Pichon C."/>
            <person name="Rouy Z."/>
            <person name="Ruf C.S."/>
            <person name="Schneider D."/>
            <person name="Tourret J."/>
            <person name="Vacherie B."/>
            <person name="Vallenet D."/>
            <person name="Medigue C."/>
            <person name="Rocha E.P.C."/>
            <person name="Denamur E."/>
        </authorList>
    </citation>
    <scope>NUCLEOTIDE SEQUENCE [LARGE SCALE GENOMIC DNA]</scope>
    <source>
        <strain>UMN026 / ExPEC</strain>
    </source>
</reference>
<keyword id="KW-0378">Hydrolase</keyword>
<keyword id="KW-0719">Serine esterase</keyword>
<sequence>MTQANLSETLFKPRFKHPETSTLVRRFNHGAQPPVQSALDGKTIPHWYRMINRLMWIWRGIDPREILDVQARIVMSDAERTDDDLYDTVIGYRGGNWIYEWATQAMVWQQKACAEEDPQLSGRHWLHAATLYNIAAYPHLKGDDLAEQAQALSNRAYEEAAQRLPGTMRQMEFTVPGGAPITGFLHMPKGDGPFPTVLMCGGLDAMQTDYYSLYERYFAPRGIAMLTIDMPSVGFSSKWKLTQDSSLLHQHVLKALPNVPWVDHTRVAAFGFRFGANVAVRLAYLESPRLKAVACLGPVVHTLLSDFKCQQQVPEMYLDVLASRLGMHDASDEALRVELNRYSLKVQGLLGRRCPTPMLSGYWKNDPFSPEEDSRLITSSTADGKLLEIPFNPVYRNFDKGLQEITDWIEKRLC</sequence>
<feature type="chain" id="PRO_1000136514" description="Esterase FrsA">
    <location>
        <begin position="1"/>
        <end position="414"/>
    </location>
</feature>
<organism>
    <name type="scientific">Escherichia coli O17:K52:H18 (strain UMN026 / ExPEC)</name>
    <dbReference type="NCBI Taxonomy" id="585056"/>
    <lineage>
        <taxon>Bacteria</taxon>
        <taxon>Pseudomonadati</taxon>
        <taxon>Pseudomonadota</taxon>
        <taxon>Gammaproteobacteria</taxon>
        <taxon>Enterobacterales</taxon>
        <taxon>Enterobacteriaceae</taxon>
        <taxon>Escherichia</taxon>
    </lineage>
</organism>